<feature type="chain" id="PRO_0000242537" description="Protein Ycf2">
    <location>
        <begin position="1"/>
        <end position="2278"/>
    </location>
</feature>
<feature type="binding site" evidence="1">
    <location>
        <begin position="1632"/>
        <end position="1639"/>
    </location>
    <ligand>
        <name>ATP</name>
        <dbReference type="ChEBI" id="CHEBI:30616"/>
    </ligand>
</feature>
<sequence length="2278" mass="266457">MRGHQFKSWIFELREILREIKNSHHFLDSWTQFNSVGSFIHIFFHQERFLKLFDPRIWSILLSRNSQGSTSNRYFTIKGVILFVVAVLIYRINNRNMVERKNLYLIGLLPIPMNSIGPRNDTLEESVGSSNINRLIVSLLYLPKGKKISESCFLNPKESTWVLPITKKCSMPESNWGSRWWRNWIGKKRDSSCKISNETVAGIEILFKEKDLKYLEFLFVYYMDDPIRKDHDWELFDRLSLRKSRNRINLNSGLLFEILVKHWISYLMSAFREKIPIEVEGFFKQQGAGSTIQSNDIEHVSHLFSRNKWAISLQNCAQFHMWQFRQDLFVSWGKNPPESDFLRNVSRENWIWLDNVWLVNKDRFFSKVQNVSSNIQYDSTRSSFVQVTDSSQLKGSSDQSRDHLDSISNEDSEYHTLINQREIQQRKERSILWDPSFLQTERKEIESGRFPKCLSGYSSMSRLFTEREKQMINHLFPEEIEEFLGNPTRSVRSFFSDRWSELHLGSNPTERSTRDQKLLKKQQDLSFVPSRRSEKKEMVNIFKIITYLQNTVSIHPISSDPGCDMVPKDEPDMDSSNKISFLNKNPFFDLFHLFHDRNRGGYTLHYDFASEERFQEMADLFTLSITEPDLVYHKGFAFSIDSCGLDQKQFLNEARDESKKKSLLVLPPIFYEENESFSRRIRKKWVRISCGNDLEDPKPKIVVFASNNIMEAVTQYRLIRNLIQIQYSTYGYIRNVLNRFFLMNRSDRNFEYGIQRDQIGKDTLNHRTIMKYTINQYLSNLKKSQKKWFEPLILISRTERSMNRDPDAYRYKWSNGSKSFQEHLEQSVSEQKSRFQVVFDRLRINQYSIDWSEVIDKKDLSKSLRFFLSKSLLFLSKLLLFLSNSLPFFCVSFGNIPIHRSEIYIYEELKGPNDQLCNQLLESIGLQIVHLKKLKPFLLDDHDTSQKSKFLINGGTISPFLFNKIPKWMIDSFHTRNNRRKSFDNPDSYFSMIFHDQDNWLNPVKPFHRSSLISSFYKANRLRFLNNPHHFCFYWNTRFPFSVEKARINNSDFTYGQFLNILFIRNKIFSLCVGKKKHAFWGRDTISPIESQVSNIFIPNDFPQSGDETYNLYKSFHFPSRSDPFVRRAIYSIADISGTPLTEGQIVNFERTYCQPLSDMNLSDSEGKNLHQYLNFNSNMGLIHTPCSEKDLSSEKRKKWSLCLKKCVEKGQMYRTFQRDSAFSTLSKWNLFQTYMPWFLTSTGYKYLNLIFLDTFSDLLPILSSSQKFVSIFPDIMHGSGISWRILQKKLCLPQWNLISEISSKCLHNLLLSEEMIHRNNESPLISTHLRSPNAREFLYSILFLLLVAGYLVRTHLLFVSRASSELQTEFEKVKSLMIPSSMIELRKLLDRYPTSEPNSFWLKNLFLVALEQLGDSLEEIRGSASGGNMLGPAYGVKSIRSKKKDWNINLIEIIDLIPNPINRITFSRNTRHLSHTSKEIYSLIRKRKNVNGDWIDEKIESWVANSDSIDDEEREFLVQFSTLTTENRIDQILLSLTHSDHLSKNDSGYQMIEQPGAIYLRYLVDIHKKHLMNYEFNPSCLAERRIFLAHYQTITYSQTSCGENSFHFPSPGKPFSLRLALSPSRGILVIGSIGTGRSYLVKYLATNSYVPFITVFLNKFLDNKSKGFLLDEIDIDDSDDIDDSDNLDASDDIDRDLDTELELLTRMNGLTVDMMPEIDRFYITLQFELAKAMSPCIIWIPNIHDLDVNESNDLSLGLLVNHLSRDCERCSTRNILVIASTHIPQKVDPALIAPNKLNTCIKIRRLLIPQQRKHFFTLSYTRGFHLEKKMFHTNGFGSITMGSNARDLVALTNEVLSISITQKKSIIDTNTIRSALHRQTWDLRSQVRSVQDHGILFYQIGRAVAQNVLLSNCPIDPISIYMKKKSCNEGDSYLYKWYFELGTSMKRLTILLYLLSCSAGSVAQDLWSLSVPDEKNGITSYGLVENDSDLVHGLLEVEGALVGSSRTEKDCSQFDNDRVTLLLRPEPRNPLDMMQKGSWSILDQRFLYEKYESEFEEGEGEGALDPQEDLFNHIVWAPRIWRPWGFLFDCIERPNELGFPYWSRSFRGKRIIYDEEDELQENDSGFLQSGTMQYQTRDRSQGLFRISQFIWDPADPLFFLFKDQPPGSVFSHRELFADEEMSKGLLTSQTDPPTSIYKRWFIKNTQEKHFELLINRQRWLRTNSSLSNGSFRSNTLSESYQYLSNLFLSNGTLLDQMPKTLLRKRWLFPDEMKIGFM</sequence>
<geneLocation type="chloroplast"/>
<reference key="1">
    <citation type="journal article" date="2006" name="Theor. Appl. Genet.">
        <title>Complete chloroplast genome sequences of Solanum bulbocastanum, Solanum lycopersicum and comparative analyses with other Solanaceae genomes.</title>
        <authorList>
            <person name="Daniell H."/>
            <person name="Lee S.-B."/>
            <person name="Grevich J."/>
            <person name="Saski C."/>
            <person name="Quesada-Vargas T."/>
            <person name="Guda C."/>
            <person name="Tomkins J."/>
            <person name="Jansen R.K."/>
        </authorList>
    </citation>
    <scope>NUCLEOTIDE SEQUENCE [LARGE SCALE GENOMIC DNA]</scope>
    <source>
        <strain>cv. PT29</strain>
    </source>
</reference>
<accession>Q2MIC5</accession>
<gene>
    <name evidence="1" type="primary">ycf2-A</name>
</gene>
<gene>
    <name evidence="1" type="primary">ycf2-B</name>
</gene>
<proteinExistence type="inferred from homology"/>
<organism>
    <name type="scientific">Solanum bulbocastanum</name>
    <name type="common">Wild potato</name>
    <dbReference type="NCBI Taxonomy" id="147425"/>
    <lineage>
        <taxon>Eukaryota</taxon>
        <taxon>Viridiplantae</taxon>
        <taxon>Streptophyta</taxon>
        <taxon>Embryophyta</taxon>
        <taxon>Tracheophyta</taxon>
        <taxon>Spermatophyta</taxon>
        <taxon>Magnoliopsida</taxon>
        <taxon>eudicotyledons</taxon>
        <taxon>Gunneridae</taxon>
        <taxon>Pentapetalae</taxon>
        <taxon>asterids</taxon>
        <taxon>lamiids</taxon>
        <taxon>Solanales</taxon>
        <taxon>Solanaceae</taxon>
        <taxon>Solanoideae</taxon>
        <taxon>Solaneae</taxon>
        <taxon>Solanum</taxon>
    </lineage>
</organism>
<dbReference type="EMBL" id="DQ347958">
    <property type="protein sequence ID" value="ABC56277.1"/>
    <property type="molecule type" value="Genomic_DNA"/>
</dbReference>
<dbReference type="EMBL" id="DQ347958">
    <property type="protein sequence ID" value="ABC56256.1"/>
    <property type="molecule type" value="Genomic_DNA"/>
</dbReference>
<dbReference type="GO" id="GO:0009570">
    <property type="term" value="C:chloroplast stroma"/>
    <property type="evidence" value="ECO:0007669"/>
    <property type="project" value="UniProtKB-SubCell"/>
</dbReference>
<dbReference type="GO" id="GO:0005524">
    <property type="term" value="F:ATP binding"/>
    <property type="evidence" value="ECO:0007669"/>
    <property type="project" value="UniProtKB-KW"/>
</dbReference>
<dbReference type="GO" id="GO:0016887">
    <property type="term" value="F:ATP hydrolysis activity"/>
    <property type="evidence" value="ECO:0007669"/>
    <property type="project" value="InterPro"/>
</dbReference>
<dbReference type="CDD" id="cd19505">
    <property type="entry name" value="RecA-like_Ycf2"/>
    <property type="match status" value="1"/>
</dbReference>
<dbReference type="Gene3D" id="3.40.50.300">
    <property type="entry name" value="P-loop containing nucleotide triphosphate hydrolases"/>
    <property type="match status" value="1"/>
</dbReference>
<dbReference type="HAMAP" id="MF_01330">
    <property type="entry name" value="Ycf2"/>
    <property type="match status" value="1"/>
</dbReference>
<dbReference type="InterPro" id="IPR003593">
    <property type="entry name" value="AAA+_ATPase"/>
</dbReference>
<dbReference type="InterPro" id="IPR003959">
    <property type="entry name" value="ATPase_AAA_core"/>
</dbReference>
<dbReference type="InterPro" id="IPR027417">
    <property type="entry name" value="P-loop_NTPase"/>
</dbReference>
<dbReference type="InterPro" id="IPR008543">
    <property type="entry name" value="Uncharacterised_Ycf2"/>
</dbReference>
<dbReference type="InterPro" id="IPR056777">
    <property type="entry name" value="Ycf2_N"/>
</dbReference>
<dbReference type="PANTHER" id="PTHR33078:SF51">
    <property type="entry name" value="PROTEIN TIC 214"/>
    <property type="match status" value="1"/>
</dbReference>
<dbReference type="PANTHER" id="PTHR33078">
    <property type="entry name" value="PROTEIN YCF2-RELATED"/>
    <property type="match status" value="1"/>
</dbReference>
<dbReference type="Pfam" id="PF00004">
    <property type="entry name" value="AAA"/>
    <property type="match status" value="1"/>
</dbReference>
<dbReference type="Pfam" id="PF05695">
    <property type="entry name" value="Ycf2"/>
    <property type="match status" value="1"/>
</dbReference>
<dbReference type="SMART" id="SM00382">
    <property type="entry name" value="AAA"/>
    <property type="match status" value="1"/>
</dbReference>
<dbReference type="SUPFAM" id="SSF52540">
    <property type="entry name" value="P-loop containing nucleoside triphosphate hydrolases"/>
    <property type="match status" value="1"/>
</dbReference>
<evidence type="ECO:0000255" key="1">
    <source>
        <dbReference type="HAMAP-Rule" id="MF_01330"/>
    </source>
</evidence>
<keyword id="KW-0067">ATP-binding</keyword>
<keyword id="KW-0150">Chloroplast</keyword>
<keyword id="KW-0547">Nucleotide-binding</keyword>
<keyword id="KW-0934">Plastid</keyword>
<comment type="function">
    <text>Probable ATPase of unknown function. Its presence in a non-photosynthetic plant (Epifagus virginiana) and experiments in tobacco indicate that it has an essential function which is probably not related to photosynthesis.</text>
</comment>
<comment type="subcellular location">
    <subcellularLocation>
        <location evidence="1">Plastid</location>
        <location evidence="1">Chloroplast stroma</location>
    </subcellularLocation>
</comment>
<comment type="similarity">
    <text evidence="1">Belongs to the Ycf2 family.</text>
</comment>
<name>YCF2_SOLBU</name>
<protein>
    <recommendedName>
        <fullName evidence="1">Protein Ycf2</fullName>
    </recommendedName>
</protein>